<accession>A4KX73</accession>
<dbReference type="EMBL" id="EF133465">
    <property type="protein sequence ID" value="ABO37204.1"/>
    <property type="molecule type" value="Genomic_DNA"/>
</dbReference>
<dbReference type="RefSeq" id="YP_001110870.1">
    <property type="nucleotide sequence ID" value="NC_009233.1"/>
</dbReference>
<dbReference type="SMR" id="A4KX73"/>
<dbReference type="KEGG" id="vg:5076070"/>
<dbReference type="Proteomes" id="UP000001324">
    <property type="component" value="Genome"/>
</dbReference>
<dbReference type="GO" id="GO:0016020">
    <property type="term" value="C:membrane"/>
    <property type="evidence" value="ECO:0007669"/>
    <property type="project" value="UniProtKB-SubCell"/>
</dbReference>
<organismHost>
    <name type="scientific">Noctuidae</name>
    <name type="common">owlet moths</name>
    <dbReference type="NCBI Taxonomy" id="7100"/>
</organismHost>
<evidence type="ECO:0000255" key="1"/>
<evidence type="ECO:0000256" key="2">
    <source>
        <dbReference type="SAM" id="MobiDB-lite"/>
    </source>
</evidence>
<evidence type="ECO:0000305" key="3"/>
<protein>
    <recommendedName>
        <fullName>Uncharacterized protein ORF18</fullName>
    </recommendedName>
</protein>
<reference key="1">
    <citation type="journal article" date="2007" name="J. Gen. Virol.">
        <title>Sequence and organization of the Heliothis virescens ascovirus genome.</title>
        <authorList>
            <person name="Asgari S."/>
            <person name="Davis J."/>
            <person name="Wood D."/>
            <person name="Wilson P."/>
            <person name="McGrath A."/>
        </authorList>
    </citation>
    <scope>NUCLEOTIDE SEQUENCE [LARGE SCALE GENOMIC DNA]</scope>
</reference>
<gene>
    <name type="ORF">ORF18</name>
</gene>
<proteinExistence type="inferred from homology"/>
<feature type="chain" id="PRO_0000330600" description="Uncharacterized protein ORF18">
    <location>
        <begin position="1"/>
        <end position="297"/>
    </location>
</feature>
<feature type="transmembrane region" description="Helical" evidence="1">
    <location>
        <begin position="277"/>
        <end position="297"/>
    </location>
</feature>
<feature type="region of interest" description="Disordered" evidence="2">
    <location>
        <begin position="175"/>
        <end position="199"/>
    </location>
</feature>
<feature type="compositionally biased region" description="Polar residues" evidence="2">
    <location>
        <begin position="176"/>
        <end position="185"/>
    </location>
</feature>
<feature type="glycosylation site" description="N-linked (GlcNAc...) asparagine; by host" evidence="1">
    <location>
        <position position="269"/>
    </location>
</feature>
<name>Y018_HVAVE</name>
<sequence>MTNVVIDTKPVWGNMLPQLKWKDGTVVISEDDKHNEPYGIGKFFNFKEDFTRLYFKAIVNNPRERKTIEALISLPRSVADVCNPGGVYLGGRTLVDNVAKKFATIKASVDANGKVGYDTSDLERLGVRCRYYVDDLVKDDALMRRILLENKWKSKYPALVKPYEEYQRSKPKTIVLPTNRNNPVRSNVDIKPVNPPSSKVVKTVETDERLKDPPHTGALKTLIPLQKPIAPVQISEKPVVVKPEIKSPSKVIQTPDPQTVVAGKIIPNNESADSRSLFGSPVLLICVASLLLLIIIL</sequence>
<keyword id="KW-0325">Glycoprotein</keyword>
<keyword id="KW-0472">Membrane</keyword>
<keyword id="KW-1185">Reference proteome</keyword>
<keyword id="KW-0812">Transmembrane</keyword>
<keyword id="KW-1133">Transmembrane helix</keyword>
<comment type="subcellular location">
    <subcellularLocation>
        <location evidence="3">Membrane</location>
        <topology evidence="3">Single-pass membrane protein</topology>
    </subcellularLocation>
</comment>
<comment type="similarity">
    <text evidence="3">Belongs to the ascovirus HvAV ORF18 family.</text>
</comment>
<organism>
    <name type="scientific">Heliothis virescens ascovirus 3e</name>
    <name type="common">HvAV-3e</name>
    <dbReference type="NCBI Taxonomy" id="260797"/>
    <lineage>
        <taxon>Viruses</taxon>
        <taxon>Varidnaviria</taxon>
        <taxon>Bamfordvirae</taxon>
        <taxon>Nucleocytoviricota</taxon>
        <taxon>Megaviricetes</taxon>
        <taxon>Pimascovirales</taxon>
        <taxon>Ascoviridae</taxon>
        <taxon>Ascovirus</taxon>
        <taxon>Ascovirus TnAV2a</taxon>
    </lineage>
</organism>